<keyword id="KW-0068">Autocatalytic cleavage</keyword>
<keyword id="KW-0963">Cytoplasm</keyword>
<keyword id="KW-0210">Decarboxylase</keyword>
<keyword id="KW-0456">Lyase</keyword>
<keyword id="KW-0566">Pantothenate biosynthesis</keyword>
<keyword id="KW-0670">Pyruvate</keyword>
<keyword id="KW-0704">Schiff base</keyword>
<keyword id="KW-0865">Zymogen</keyword>
<reference key="1">
    <citation type="journal article" date="2000" name="Nature">
        <title>Complete DNA sequence of a serogroup A strain of Neisseria meningitidis Z2491.</title>
        <authorList>
            <person name="Parkhill J."/>
            <person name="Achtman M."/>
            <person name="James K.D."/>
            <person name="Bentley S.D."/>
            <person name="Churcher C.M."/>
            <person name="Klee S.R."/>
            <person name="Morelli G."/>
            <person name="Basham D."/>
            <person name="Brown D."/>
            <person name="Chillingworth T."/>
            <person name="Davies R.M."/>
            <person name="Davis P."/>
            <person name="Devlin K."/>
            <person name="Feltwell T."/>
            <person name="Hamlin N."/>
            <person name="Holroyd S."/>
            <person name="Jagels K."/>
            <person name="Leather S."/>
            <person name="Moule S."/>
            <person name="Mungall K.L."/>
            <person name="Quail M.A."/>
            <person name="Rajandream M.A."/>
            <person name="Rutherford K.M."/>
            <person name="Simmonds M."/>
            <person name="Skelton J."/>
            <person name="Whitehead S."/>
            <person name="Spratt B.G."/>
            <person name="Barrell B.G."/>
        </authorList>
    </citation>
    <scope>NUCLEOTIDE SEQUENCE [LARGE SCALE GENOMIC DNA]</scope>
    <source>
        <strain>DSM 15465 / Z2491</strain>
    </source>
</reference>
<name>PAND_NEIMA</name>
<evidence type="ECO:0000255" key="1">
    <source>
        <dbReference type="HAMAP-Rule" id="MF_00446"/>
    </source>
</evidence>
<gene>
    <name evidence="1" type="primary">panD</name>
    <name type="ordered locus">NMA1492</name>
</gene>
<organism>
    <name type="scientific">Neisseria meningitidis serogroup A / serotype 4A (strain DSM 15465 / Z2491)</name>
    <dbReference type="NCBI Taxonomy" id="122587"/>
    <lineage>
        <taxon>Bacteria</taxon>
        <taxon>Pseudomonadati</taxon>
        <taxon>Pseudomonadota</taxon>
        <taxon>Betaproteobacteria</taxon>
        <taxon>Neisseriales</taxon>
        <taxon>Neisseriaceae</taxon>
        <taxon>Neisseria</taxon>
    </lineage>
</organism>
<feature type="chain" id="PRO_0000023125" description="Aspartate 1-decarboxylase beta chain" evidence="1">
    <location>
        <begin position="1"/>
        <end position="24"/>
    </location>
</feature>
<feature type="chain" id="PRO_0000023126" description="Aspartate 1-decarboxylase alpha chain" evidence="1">
    <location>
        <begin position="25"/>
        <end position="127"/>
    </location>
</feature>
<feature type="active site" description="Schiff-base intermediate with substrate; via pyruvic acid" evidence="1">
    <location>
        <position position="25"/>
    </location>
</feature>
<feature type="active site" description="Proton donor" evidence="1">
    <location>
        <position position="58"/>
    </location>
</feature>
<feature type="binding site" evidence="1">
    <location>
        <position position="57"/>
    </location>
    <ligand>
        <name>substrate</name>
    </ligand>
</feature>
<feature type="binding site" evidence="1">
    <location>
        <begin position="73"/>
        <end position="75"/>
    </location>
    <ligand>
        <name>substrate</name>
    </ligand>
</feature>
<feature type="modified residue" description="Pyruvic acid (Ser)" evidence="1">
    <location>
        <position position="25"/>
    </location>
</feature>
<sequence length="127" mass="13839">MFRTMLGGKIHRATVTEADLNYVGSITVDQDLLDAAGIYPNEKVAIVNNNNGERFETYTIAGKRGSGVICLNGAAARLVQKSDIVIIMSYVQLSEPEIAAHEPKVVLVDGNNKIRDIISYEPPHTVL</sequence>
<comment type="function">
    <text evidence="1">Catalyzes the pyruvoyl-dependent decarboxylation of aspartate to produce beta-alanine.</text>
</comment>
<comment type="catalytic activity">
    <reaction evidence="1">
        <text>L-aspartate + H(+) = beta-alanine + CO2</text>
        <dbReference type="Rhea" id="RHEA:19497"/>
        <dbReference type="ChEBI" id="CHEBI:15378"/>
        <dbReference type="ChEBI" id="CHEBI:16526"/>
        <dbReference type="ChEBI" id="CHEBI:29991"/>
        <dbReference type="ChEBI" id="CHEBI:57966"/>
        <dbReference type="EC" id="4.1.1.11"/>
    </reaction>
</comment>
<comment type="cofactor">
    <cofactor evidence="1">
        <name>pyruvate</name>
        <dbReference type="ChEBI" id="CHEBI:15361"/>
    </cofactor>
    <text evidence="1">Binds 1 pyruvoyl group covalently per subunit.</text>
</comment>
<comment type="pathway">
    <text evidence="1">Cofactor biosynthesis; (R)-pantothenate biosynthesis; beta-alanine from L-aspartate: step 1/1.</text>
</comment>
<comment type="subunit">
    <text evidence="1">Heterooctamer of four alpha and four beta subunits.</text>
</comment>
<comment type="subcellular location">
    <subcellularLocation>
        <location evidence="1">Cytoplasm</location>
    </subcellularLocation>
</comment>
<comment type="PTM">
    <text evidence="1">Is synthesized initially as an inactive proenzyme, which is activated by self-cleavage at a specific serine bond to produce a beta-subunit with a hydroxyl group at its C-terminus and an alpha-subunit with a pyruvoyl group at its N-terminus.</text>
</comment>
<comment type="similarity">
    <text evidence="1">Belongs to the PanD family.</text>
</comment>
<proteinExistence type="inferred from homology"/>
<dbReference type="EC" id="4.1.1.11" evidence="1"/>
<dbReference type="EMBL" id="AL157959">
    <property type="protein sequence ID" value="CAM08644.1"/>
    <property type="molecule type" value="Genomic_DNA"/>
</dbReference>
<dbReference type="PIR" id="F81840">
    <property type="entry name" value="F81840"/>
</dbReference>
<dbReference type="RefSeq" id="WP_002246947.1">
    <property type="nucleotide sequence ID" value="NC_003116.1"/>
</dbReference>
<dbReference type="SMR" id="Q9JU49"/>
<dbReference type="EnsemblBacteria" id="CAM08644">
    <property type="protein sequence ID" value="CAM08644"/>
    <property type="gene ID" value="NMA1492"/>
</dbReference>
<dbReference type="KEGG" id="nma:NMA1492"/>
<dbReference type="HOGENOM" id="CLU_115305_2_0_4"/>
<dbReference type="UniPathway" id="UPA00028">
    <property type="reaction ID" value="UER00002"/>
</dbReference>
<dbReference type="Proteomes" id="UP000000626">
    <property type="component" value="Chromosome"/>
</dbReference>
<dbReference type="GO" id="GO:0005829">
    <property type="term" value="C:cytosol"/>
    <property type="evidence" value="ECO:0007669"/>
    <property type="project" value="TreeGrafter"/>
</dbReference>
<dbReference type="GO" id="GO:0004068">
    <property type="term" value="F:aspartate 1-decarboxylase activity"/>
    <property type="evidence" value="ECO:0007669"/>
    <property type="project" value="UniProtKB-UniRule"/>
</dbReference>
<dbReference type="GO" id="GO:0006523">
    <property type="term" value="P:alanine biosynthetic process"/>
    <property type="evidence" value="ECO:0007669"/>
    <property type="project" value="InterPro"/>
</dbReference>
<dbReference type="GO" id="GO:0015940">
    <property type="term" value="P:pantothenate biosynthetic process"/>
    <property type="evidence" value="ECO:0007669"/>
    <property type="project" value="UniProtKB-UniRule"/>
</dbReference>
<dbReference type="CDD" id="cd06919">
    <property type="entry name" value="Asp_decarbox"/>
    <property type="match status" value="1"/>
</dbReference>
<dbReference type="Gene3D" id="2.40.40.20">
    <property type="match status" value="1"/>
</dbReference>
<dbReference type="HAMAP" id="MF_00446">
    <property type="entry name" value="PanD"/>
    <property type="match status" value="1"/>
</dbReference>
<dbReference type="InterPro" id="IPR009010">
    <property type="entry name" value="Asp_de-COase-like_dom_sf"/>
</dbReference>
<dbReference type="InterPro" id="IPR003190">
    <property type="entry name" value="Asp_decarbox"/>
</dbReference>
<dbReference type="NCBIfam" id="TIGR00223">
    <property type="entry name" value="panD"/>
    <property type="match status" value="1"/>
</dbReference>
<dbReference type="PANTHER" id="PTHR21012">
    <property type="entry name" value="ASPARTATE 1-DECARBOXYLASE"/>
    <property type="match status" value="1"/>
</dbReference>
<dbReference type="PANTHER" id="PTHR21012:SF0">
    <property type="entry name" value="ASPARTATE 1-DECARBOXYLASE"/>
    <property type="match status" value="1"/>
</dbReference>
<dbReference type="Pfam" id="PF02261">
    <property type="entry name" value="Asp_decarbox"/>
    <property type="match status" value="1"/>
</dbReference>
<dbReference type="PIRSF" id="PIRSF006246">
    <property type="entry name" value="Asp_decarbox"/>
    <property type="match status" value="1"/>
</dbReference>
<dbReference type="SUPFAM" id="SSF50692">
    <property type="entry name" value="ADC-like"/>
    <property type="match status" value="1"/>
</dbReference>
<protein>
    <recommendedName>
        <fullName evidence="1">Aspartate 1-decarboxylase</fullName>
        <ecNumber evidence="1">4.1.1.11</ecNumber>
    </recommendedName>
    <alternativeName>
        <fullName evidence="1">Aspartate alpha-decarboxylase</fullName>
    </alternativeName>
    <component>
        <recommendedName>
            <fullName evidence="1">Aspartate 1-decarboxylase beta chain</fullName>
        </recommendedName>
    </component>
    <component>
        <recommendedName>
            <fullName evidence="1">Aspartate 1-decarboxylase alpha chain</fullName>
        </recommendedName>
    </component>
</protein>
<accession>Q9JU49</accession>
<accession>A1IS89</accession>